<feature type="chain" id="PRO_0000097598" description="SAM and SH3 domain-containing protein 1">
    <location>
        <begin position="1"/>
        <end position="1230"/>
    </location>
</feature>
<feature type="domain" description="SH3" evidence="3">
    <location>
        <begin position="547"/>
        <end position="608"/>
    </location>
</feature>
<feature type="domain" description="SAM 1" evidence="2">
    <location>
        <begin position="626"/>
        <end position="690"/>
    </location>
</feature>
<feature type="domain" description="SAM 2" evidence="2">
    <location>
        <begin position="1160"/>
        <end position="1224"/>
    </location>
</feature>
<feature type="region of interest" description="Disordered" evidence="4">
    <location>
        <begin position="1"/>
        <end position="30"/>
    </location>
</feature>
<feature type="region of interest" description="Disordered" evidence="4">
    <location>
        <begin position="211"/>
        <end position="249"/>
    </location>
</feature>
<feature type="region of interest" description="Disordered" evidence="4">
    <location>
        <begin position="275"/>
        <end position="337"/>
    </location>
</feature>
<feature type="region of interest" description="Disordered" evidence="4">
    <location>
        <begin position="439"/>
        <end position="566"/>
    </location>
</feature>
<feature type="region of interest" description="Disordered" evidence="4">
    <location>
        <begin position="610"/>
        <end position="633"/>
    </location>
</feature>
<feature type="region of interest" description="Disordered" evidence="4">
    <location>
        <begin position="705"/>
        <end position="792"/>
    </location>
</feature>
<feature type="region of interest" description="Disordered" evidence="4">
    <location>
        <begin position="818"/>
        <end position="875"/>
    </location>
</feature>
<feature type="region of interest" description="Required for interaction with TRAF6" evidence="1">
    <location>
        <begin position="844"/>
        <end position="852"/>
    </location>
</feature>
<feature type="region of interest" description="Disordered" evidence="4">
    <location>
        <begin position="915"/>
        <end position="1045"/>
    </location>
</feature>
<feature type="compositionally biased region" description="Low complexity" evidence="4">
    <location>
        <begin position="1"/>
        <end position="10"/>
    </location>
</feature>
<feature type="compositionally biased region" description="Basic and acidic residues" evidence="4">
    <location>
        <begin position="275"/>
        <end position="297"/>
    </location>
</feature>
<feature type="compositionally biased region" description="Low complexity" evidence="4">
    <location>
        <begin position="324"/>
        <end position="336"/>
    </location>
</feature>
<feature type="compositionally biased region" description="Polar residues" evidence="4">
    <location>
        <begin position="461"/>
        <end position="470"/>
    </location>
</feature>
<feature type="compositionally biased region" description="Basic and acidic residues" evidence="4">
    <location>
        <begin position="485"/>
        <end position="494"/>
    </location>
</feature>
<feature type="compositionally biased region" description="Low complexity" evidence="4">
    <location>
        <begin position="498"/>
        <end position="516"/>
    </location>
</feature>
<feature type="compositionally biased region" description="Polar residues" evidence="4">
    <location>
        <begin position="517"/>
        <end position="529"/>
    </location>
</feature>
<feature type="compositionally biased region" description="Basic residues" evidence="4">
    <location>
        <begin position="615"/>
        <end position="624"/>
    </location>
</feature>
<feature type="compositionally biased region" description="Polar residues" evidence="4">
    <location>
        <begin position="737"/>
        <end position="758"/>
    </location>
</feature>
<feature type="compositionally biased region" description="Basic and acidic residues" evidence="4">
    <location>
        <begin position="768"/>
        <end position="779"/>
    </location>
</feature>
<feature type="compositionally biased region" description="Polar residues" evidence="4">
    <location>
        <begin position="852"/>
        <end position="868"/>
    </location>
</feature>
<feature type="compositionally biased region" description="Basic and acidic residues" evidence="4">
    <location>
        <begin position="940"/>
        <end position="956"/>
    </location>
</feature>
<feature type="compositionally biased region" description="Polar residues" evidence="4">
    <location>
        <begin position="962"/>
        <end position="972"/>
    </location>
</feature>
<feature type="compositionally biased region" description="Low complexity" evidence="4">
    <location>
        <begin position="1008"/>
        <end position="1019"/>
    </location>
</feature>
<feature type="modified residue" description="Phosphoserine" evidence="7 8">
    <location>
        <position position="83"/>
    </location>
</feature>
<feature type="modified residue" description="Phosphoserine" evidence="8">
    <location>
        <position position="241"/>
    </location>
</feature>
<feature type="modified residue" description="Phosphoserine" evidence="6 8">
    <location>
        <position position="400"/>
    </location>
</feature>
<feature type="modified residue" description="Phosphoserine" evidence="8">
    <location>
        <position position="813"/>
    </location>
</feature>
<feature type="modified residue" description="Phosphoserine" evidence="7">
    <location>
        <position position="831"/>
    </location>
</feature>
<feature type="helix" evidence="9">
    <location>
        <begin position="631"/>
        <end position="637"/>
    </location>
</feature>
<feature type="helix" evidence="9">
    <location>
        <begin position="641"/>
        <end position="643"/>
    </location>
</feature>
<feature type="helix" evidence="9">
    <location>
        <begin position="644"/>
        <end position="648"/>
    </location>
</feature>
<feature type="turn" evidence="9">
    <location>
        <begin position="649"/>
        <end position="651"/>
    </location>
</feature>
<feature type="helix" evidence="9">
    <location>
        <begin position="655"/>
        <end position="658"/>
    </location>
</feature>
<feature type="helix" evidence="9">
    <location>
        <begin position="663"/>
        <end position="668"/>
    </location>
</feature>
<feature type="helix" evidence="9">
    <location>
        <begin position="674"/>
        <end position="689"/>
    </location>
</feature>
<keyword id="KW-0002">3D-structure</keyword>
<keyword id="KW-0963">Cytoplasm</keyword>
<keyword id="KW-0597">Phosphoprotein</keyword>
<keyword id="KW-1185">Reference proteome</keyword>
<keyword id="KW-0677">Repeat</keyword>
<keyword id="KW-0728">SH3 domain</keyword>
<keyword id="KW-0043">Tumor suppressor</keyword>
<evidence type="ECO:0000250" key="1">
    <source>
        <dbReference type="UniProtKB" id="O94885"/>
    </source>
</evidence>
<evidence type="ECO:0000255" key="2">
    <source>
        <dbReference type="PROSITE-ProRule" id="PRU00184"/>
    </source>
</evidence>
<evidence type="ECO:0000255" key="3">
    <source>
        <dbReference type="PROSITE-ProRule" id="PRU00192"/>
    </source>
</evidence>
<evidence type="ECO:0000256" key="4">
    <source>
        <dbReference type="SAM" id="MobiDB-lite"/>
    </source>
</evidence>
<evidence type="ECO:0000269" key="5">
    <source>
    </source>
</evidence>
<evidence type="ECO:0007744" key="6">
    <source>
    </source>
</evidence>
<evidence type="ECO:0007744" key="7">
    <source>
    </source>
</evidence>
<evidence type="ECO:0007744" key="8">
    <source>
    </source>
</evidence>
<evidence type="ECO:0007829" key="9">
    <source>
        <dbReference type="PDB" id="8J1I"/>
    </source>
</evidence>
<dbReference type="EMBL" id="AJ507736">
    <property type="protein sequence ID" value="CAD47812.1"/>
    <property type="molecule type" value="mRNA"/>
</dbReference>
<dbReference type="CCDS" id="CCDS23692.1"/>
<dbReference type="RefSeq" id="NP_780364.3">
    <property type="nucleotide sequence ID" value="NM_175155.4"/>
</dbReference>
<dbReference type="PDB" id="8J1I">
    <property type="method" value="X-ray"/>
    <property type="resolution" value="1.60 A"/>
    <property type="chains" value="H=625-691"/>
</dbReference>
<dbReference type="PDBsum" id="8J1I"/>
<dbReference type="SMR" id="P59808"/>
<dbReference type="BioGRID" id="213862">
    <property type="interactions" value="3"/>
</dbReference>
<dbReference type="FunCoup" id="P59808">
    <property type="interactions" value="153"/>
</dbReference>
<dbReference type="STRING" id="10090.ENSMUSP00000015449"/>
<dbReference type="GlyGen" id="P59808">
    <property type="glycosylation" value="2 sites, 1 N-linked glycan (1 site), 1 O-linked glycan (1 site)"/>
</dbReference>
<dbReference type="iPTMnet" id="P59808"/>
<dbReference type="PhosphoSitePlus" id="P59808"/>
<dbReference type="jPOST" id="P59808"/>
<dbReference type="PaxDb" id="10090-ENSMUSP00000015449"/>
<dbReference type="ProteomicsDB" id="256597"/>
<dbReference type="Pumba" id="P59808"/>
<dbReference type="DNASU" id="70097"/>
<dbReference type="GeneID" id="70097"/>
<dbReference type="KEGG" id="mmu:70097"/>
<dbReference type="AGR" id="MGI:1917347"/>
<dbReference type="CTD" id="23328"/>
<dbReference type="MGI" id="MGI:1917347">
    <property type="gene designation" value="Sash1"/>
</dbReference>
<dbReference type="eggNOG" id="KOG4384">
    <property type="taxonomic scope" value="Eukaryota"/>
</dbReference>
<dbReference type="InParanoid" id="P59808"/>
<dbReference type="OrthoDB" id="10047268at2759"/>
<dbReference type="PhylomeDB" id="P59808"/>
<dbReference type="BioGRID-ORCS" id="70097">
    <property type="hits" value="0 hits in 77 CRISPR screens"/>
</dbReference>
<dbReference type="ChiTaRS" id="Sash1">
    <property type="organism name" value="mouse"/>
</dbReference>
<dbReference type="PRO" id="PR:P59808"/>
<dbReference type="Proteomes" id="UP000000589">
    <property type="component" value="Unplaced"/>
</dbReference>
<dbReference type="RNAct" id="P59808">
    <property type="molecule type" value="protein"/>
</dbReference>
<dbReference type="GO" id="GO:0005737">
    <property type="term" value="C:cytoplasm"/>
    <property type="evidence" value="ECO:0007669"/>
    <property type="project" value="UniProtKB-SubCell"/>
</dbReference>
<dbReference type="GO" id="GO:0016020">
    <property type="term" value="C:membrane"/>
    <property type="evidence" value="ECO:0000314"/>
    <property type="project" value="MGI"/>
</dbReference>
<dbReference type="GO" id="GO:0032991">
    <property type="term" value="C:protein-containing complex"/>
    <property type="evidence" value="ECO:0000266"/>
    <property type="project" value="MGI"/>
</dbReference>
<dbReference type="GO" id="GO:0031435">
    <property type="term" value="F:mitogen-activated protein kinase kinase kinase binding"/>
    <property type="evidence" value="ECO:0000266"/>
    <property type="project" value="MGI"/>
</dbReference>
<dbReference type="GO" id="GO:0060090">
    <property type="term" value="F:molecular adaptor activity"/>
    <property type="evidence" value="ECO:0000266"/>
    <property type="project" value="MGI"/>
</dbReference>
<dbReference type="GO" id="GO:0019901">
    <property type="term" value="F:protein kinase binding"/>
    <property type="evidence" value="ECO:0000266"/>
    <property type="project" value="MGI"/>
</dbReference>
<dbReference type="GO" id="GO:0045766">
    <property type="term" value="P:positive regulation of angiogenesis"/>
    <property type="evidence" value="ECO:0000266"/>
    <property type="project" value="MGI"/>
</dbReference>
<dbReference type="GO" id="GO:0010595">
    <property type="term" value="P:positive regulation of endothelial cell migration"/>
    <property type="evidence" value="ECO:0000266"/>
    <property type="project" value="MGI"/>
</dbReference>
<dbReference type="GO" id="GO:0031666">
    <property type="term" value="P:positive regulation of lipopolysaccharide-mediated signaling pathway"/>
    <property type="evidence" value="ECO:0000266"/>
    <property type="project" value="MGI"/>
</dbReference>
<dbReference type="GO" id="GO:1901224">
    <property type="term" value="P:positive regulation of non-canonical NF-kappaB signal transduction"/>
    <property type="evidence" value="ECO:0000266"/>
    <property type="project" value="MGI"/>
</dbReference>
<dbReference type="GO" id="GO:1900745">
    <property type="term" value="P:positive regulation of p38MAPK cascade"/>
    <property type="evidence" value="ECO:0000266"/>
    <property type="project" value="MGI"/>
</dbReference>
<dbReference type="GO" id="GO:0000209">
    <property type="term" value="P:protein polyubiquitination"/>
    <property type="evidence" value="ECO:0000266"/>
    <property type="project" value="MGI"/>
</dbReference>
<dbReference type="GO" id="GO:1902498">
    <property type="term" value="P:regulation of protein autoubiquitination"/>
    <property type="evidence" value="ECO:0000266"/>
    <property type="project" value="MGI"/>
</dbReference>
<dbReference type="GO" id="GO:1900044">
    <property type="term" value="P:regulation of protein K63-linked ubiquitination"/>
    <property type="evidence" value="ECO:0000266"/>
    <property type="project" value="MGI"/>
</dbReference>
<dbReference type="CDD" id="cd09559">
    <property type="entry name" value="SAM_SASH1_repeat1"/>
    <property type="match status" value="1"/>
</dbReference>
<dbReference type="CDD" id="cd09492">
    <property type="entry name" value="SAM_SASH1_repeat2"/>
    <property type="match status" value="1"/>
</dbReference>
<dbReference type="CDD" id="cd11967">
    <property type="entry name" value="SH3_SASH1"/>
    <property type="match status" value="1"/>
</dbReference>
<dbReference type="FunFam" id="1.10.150.50:FF:000024">
    <property type="entry name" value="Putative sam and sh3 domain-containing protein 1"/>
    <property type="match status" value="1"/>
</dbReference>
<dbReference type="FunFam" id="1.10.150.50:FF:000038">
    <property type="entry name" value="Putative sam and sh3 domain-containing protein 1"/>
    <property type="match status" value="1"/>
</dbReference>
<dbReference type="FunFam" id="2.30.30.40:FF:000021">
    <property type="entry name" value="Putative sam and sh3 domain-containing protein 1"/>
    <property type="match status" value="1"/>
</dbReference>
<dbReference type="Gene3D" id="2.30.30.40">
    <property type="entry name" value="SH3 Domains"/>
    <property type="match status" value="1"/>
</dbReference>
<dbReference type="Gene3D" id="1.10.150.50">
    <property type="entry name" value="Transcription Factor, Ets-1"/>
    <property type="match status" value="2"/>
</dbReference>
<dbReference type="InterPro" id="IPR001660">
    <property type="entry name" value="SAM"/>
</dbReference>
<dbReference type="InterPro" id="IPR051725">
    <property type="entry name" value="SAM-SH3_domain_protein"/>
</dbReference>
<dbReference type="InterPro" id="IPR013761">
    <property type="entry name" value="SAM/pointed_sf"/>
</dbReference>
<dbReference type="InterPro" id="IPR037627">
    <property type="entry name" value="SASH1_SAM_repeat1"/>
</dbReference>
<dbReference type="InterPro" id="IPR037630">
    <property type="entry name" value="SASH1_SAM_repeat2"/>
</dbReference>
<dbReference type="InterPro" id="IPR035720">
    <property type="entry name" value="SASH1_SH3"/>
</dbReference>
<dbReference type="InterPro" id="IPR036028">
    <property type="entry name" value="SH3-like_dom_sf"/>
</dbReference>
<dbReference type="InterPro" id="IPR001452">
    <property type="entry name" value="SH3_domain"/>
</dbReference>
<dbReference type="InterPro" id="IPR021090">
    <property type="entry name" value="SPIDER"/>
</dbReference>
<dbReference type="PANTHER" id="PTHR12301:SF3">
    <property type="entry name" value="SAM AND SH3 DOMAIN-CONTAINING PROTEIN 1"/>
    <property type="match status" value="1"/>
</dbReference>
<dbReference type="PANTHER" id="PTHR12301">
    <property type="entry name" value="SAM-DOMAIN, SH3 AND NUCLEAR LOCALIZATION SIGNALS PROTEIN RELATED"/>
    <property type="match status" value="1"/>
</dbReference>
<dbReference type="Pfam" id="PF00536">
    <property type="entry name" value="SAM_1"/>
    <property type="match status" value="1"/>
</dbReference>
<dbReference type="Pfam" id="PF07647">
    <property type="entry name" value="SAM_2"/>
    <property type="match status" value="1"/>
</dbReference>
<dbReference type="Pfam" id="PF07653">
    <property type="entry name" value="SH3_2"/>
    <property type="match status" value="1"/>
</dbReference>
<dbReference type="Pfam" id="PF12485">
    <property type="entry name" value="SPIDER"/>
    <property type="match status" value="1"/>
</dbReference>
<dbReference type="SMART" id="SM00454">
    <property type="entry name" value="SAM"/>
    <property type="match status" value="2"/>
</dbReference>
<dbReference type="SMART" id="SM00326">
    <property type="entry name" value="SH3"/>
    <property type="match status" value="1"/>
</dbReference>
<dbReference type="SUPFAM" id="SSF47769">
    <property type="entry name" value="SAM/Pointed domain"/>
    <property type="match status" value="2"/>
</dbReference>
<dbReference type="SUPFAM" id="SSF50044">
    <property type="entry name" value="SH3-domain"/>
    <property type="match status" value="1"/>
</dbReference>
<dbReference type="PROSITE" id="PS50105">
    <property type="entry name" value="SAM_DOMAIN"/>
    <property type="match status" value="2"/>
</dbReference>
<dbReference type="PROSITE" id="PS50002">
    <property type="entry name" value="SH3"/>
    <property type="match status" value="1"/>
</dbReference>
<name>SASH1_MOUSE</name>
<accession>P59808</accession>
<organism>
    <name type="scientific">Mus musculus</name>
    <name type="common">Mouse</name>
    <dbReference type="NCBI Taxonomy" id="10090"/>
    <lineage>
        <taxon>Eukaryota</taxon>
        <taxon>Metazoa</taxon>
        <taxon>Chordata</taxon>
        <taxon>Craniata</taxon>
        <taxon>Vertebrata</taxon>
        <taxon>Euteleostomi</taxon>
        <taxon>Mammalia</taxon>
        <taxon>Eutheria</taxon>
        <taxon>Euarchontoglires</taxon>
        <taxon>Glires</taxon>
        <taxon>Rodentia</taxon>
        <taxon>Myomorpha</taxon>
        <taxon>Muroidea</taxon>
        <taxon>Muridae</taxon>
        <taxon>Murinae</taxon>
        <taxon>Mus</taxon>
        <taxon>Mus</taxon>
    </lineage>
</organism>
<protein>
    <recommendedName>
        <fullName>SAM and SH3 domain-containing protein 1</fullName>
    </recommendedName>
</protein>
<reference key="1">
    <citation type="journal article" date="2003" name="Oncogene">
        <title>SASH1 - a candidate tumour suppressor gene on chromosome 6q24.3 is downregulated in breast cancer.</title>
        <authorList>
            <person name="Zeller C."/>
            <person name="Hinzmann B."/>
            <person name="Seitz S."/>
            <person name="Prokoph H."/>
            <person name="Burkhardt-Goettges E."/>
            <person name="Fischer J."/>
            <person name="Jandrig B."/>
            <person name="Estevez-Schwarz L."/>
            <person name="Rosenthal A."/>
            <person name="Scherneck S."/>
        </authorList>
    </citation>
    <scope>NUCLEOTIDE SEQUENCE [MRNA]</scope>
</reference>
<reference key="2">
    <citation type="journal article" date="2006" name="Mol. Cell. Proteomics">
        <title>Comprehensive identification of phosphorylation sites in postsynaptic density preparations.</title>
        <authorList>
            <person name="Trinidad J.C."/>
            <person name="Specht C.G."/>
            <person name="Thalhammer A."/>
            <person name="Schoepfer R."/>
            <person name="Burlingame A.L."/>
        </authorList>
    </citation>
    <scope>IDENTIFICATION BY MASS SPECTROMETRY [LARGE SCALE ANALYSIS]</scope>
    <source>
        <tissue>Brain</tissue>
    </source>
</reference>
<reference key="3">
    <citation type="journal article" date="2007" name="Proc. Natl. Acad. Sci. U.S.A.">
        <title>Large-scale phosphorylation analysis of mouse liver.</title>
        <authorList>
            <person name="Villen J."/>
            <person name="Beausoleil S.A."/>
            <person name="Gerber S.A."/>
            <person name="Gygi S.P."/>
        </authorList>
    </citation>
    <scope>PHOSPHORYLATION [LARGE SCALE ANALYSIS] AT SER-400</scope>
    <scope>IDENTIFICATION BY MASS SPECTROMETRY [LARGE SCALE ANALYSIS]</scope>
    <source>
        <tissue>Liver</tissue>
    </source>
</reference>
<reference key="4">
    <citation type="journal article" date="2009" name="Immunity">
        <title>The phagosomal proteome in interferon-gamma-activated macrophages.</title>
        <authorList>
            <person name="Trost M."/>
            <person name="English L."/>
            <person name="Lemieux S."/>
            <person name="Courcelles M."/>
            <person name="Desjardins M."/>
            <person name="Thibault P."/>
        </authorList>
    </citation>
    <scope>PHOSPHORYLATION [LARGE SCALE ANALYSIS] AT SER-83 AND SER-831</scope>
    <scope>IDENTIFICATION BY MASS SPECTROMETRY [LARGE SCALE ANALYSIS]</scope>
</reference>
<reference key="5">
    <citation type="journal article" date="2010" name="Cell">
        <title>A tissue-specific atlas of mouse protein phosphorylation and expression.</title>
        <authorList>
            <person name="Huttlin E.L."/>
            <person name="Jedrychowski M.P."/>
            <person name="Elias J.E."/>
            <person name="Goswami T."/>
            <person name="Rad R."/>
            <person name="Beausoleil S.A."/>
            <person name="Villen J."/>
            <person name="Haas W."/>
            <person name="Sowa M.E."/>
            <person name="Gygi S.P."/>
        </authorList>
    </citation>
    <scope>PHOSPHORYLATION [LARGE SCALE ANALYSIS] AT SER-83; SER-241; SER-400 AND SER-813</scope>
    <scope>IDENTIFICATION BY MASS SPECTROMETRY [LARGE SCALE ANALYSIS]</scope>
    <source>
        <tissue>Brain</tissue>
        <tissue>Brown adipose tissue</tissue>
        <tissue>Heart</tissue>
        <tissue>Kidney</tissue>
        <tissue>Liver</tissue>
        <tissue>Lung</tissue>
        <tissue>Pancreas</tissue>
        <tissue>Spleen</tissue>
        <tissue>Testis</tissue>
    </source>
</reference>
<reference key="6">
    <citation type="journal article" date="2013" name="J. Immunol.">
        <title>SASH1 is a scaffold molecule in endothelial TLR4 signaling.</title>
        <authorList>
            <person name="Dauphinee S.M."/>
            <person name="Clayton A."/>
            <person name="Hussainkhel A."/>
            <person name="Yang C."/>
            <person name="Park Y.J."/>
            <person name="Fuller M.E."/>
            <person name="Blonder J."/>
            <person name="Veenstra T.D."/>
            <person name="Karsan A."/>
        </authorList>
    </citation>
    <scope>TISSUE SPECIFICITY</scope>
</reference>
<gene>
    <name type="primary">Sash1</name>
</gene>
<comment type="function">
    <text evidence="1">Is a positive regulator of NF-kappa-B signaling downstream of TLR4 activation. It acts as a scaffold molecule to assemble a molecular complex that includes TRAF6, MAP3K7, CHUK and IKBKB, thereby facilitating NF-kappa-B signaling activation. Regulates TRAF6 and MAP3K7 ubiquitination. Involved in the regulation of cell mobility. Regulates lipolysaccharide (LPS)-induced endothelial cell migration. Is involved in the regulation of skin pigmentation through the control of melanocyte migration in the epidermis.</text>
</comment>
<comment type="subunit">
    <text evidence="1">Interacts with GNAS. Interacts with IQGAP1. Interacts with TRAF6 (via C-terminus); the interaction is LPS-dependent. Interacts with MAP3K7, CHUK and IKBKB.</text>
</comment>
<comment type="subcellular location">
    <subcellularLocation>
        <location evidence="1">Cytoplasm</location>
    </subcellularLocation>
</comment>
<comment type="tissue specificity">
    <text evidence="5">Expressed in the microvascular endothelium of various organs, as well as in parenchymal cells. Expressed in the endothelium but not lymphoid cells of spleen and thymus.</text>
</comment>
<sequence>MEEDAGAASPAPEPEPEVDPARELEPEAGVSESISRLWTDVMGILDGSLGNIDDLAQQYADYYNTCFSDVCERMEELRKRRVSQDLDVEKPDASPTSLQLRSQIEESLGFCSAVSTPEVERKYPLHKSNSEDGCVGKGDWKKKNKYFWQNFRKNQKGIMRQTSKGEDVGYVASEITMSDEERIQLMMMVKEKMITIEEALARLKEYEAQHRQSSTLDPADWPDGSYPTLDGSSTCNSREQSDDETEDSVKFKRLHKLVNSTRRVRKKLIRVEEMKKPSAEGGEEHVFENSPVQDERSALYSGVHKKPFFYDGSPEKPPEDDADSLTPSPSSSSLDTWGAGRKLVKTFSKGESRGLIKPPKKMGTFFSYPEEEKAQKVSRSLTEGEMKKGLGSLSHGRTCSFGGFDLTNRSLHVGSNNSDPAGKEGDFVYKEVIKSPPAPRISLGKKVRSVKETMRKRMSKKYSSPVSEQDSGLDGMPSSPASGKPDSEHVDKPKLKAGGSVESLRSSLSGQSSMSGQTVSTTDSSTSNRESVKSEDGDDEEPPYRGPFCGRARVHTDFTPSPYDTDSLKLKKGDIIDIISKPPMGTWMGLLNNKVGTFKFIYVDVLNEEEEKPKRPTRRRKKGRPSQPKSVEDLLDRINLKEHMPTFLFNGYEDLDTFKLLEEEDLDELNIRDPEHRAVLLTAVELLQEYDSNSDQSGSQEKLLVDNQGLSGRSPRDSGCYESSENLENAKTHKPSVLSTKSSTESNLKSFTRSQPGNYPTLPLMKSGEVRKQGEEGRLGRGLAPDTAKSCDVPSVTDLSKNRRSLPVSICRSCETLEGPEPVESWPRSHSLDDLQGDADVGKNVPTEMPETCSQNVPEVPQKTSACTSKALPRGRDPTADVMLLTQSKRFSDPPKTMAKKLDGSVVASNLGIAPPQCIPRDFEAQPPVKPGLTRTSLEGLRKGHDHHPLGTKEGVDGEQSAPETRTQSRHPSQPPPVPAKKSRERLANGLHLVPSPEAPILPLKKASPASPVSPSDCPSPREPRPSSGTEPGSPACTRPPPWLAELPESTSLQEHGVKLGPVLSRKVSCVRGVDLEMLTENKLQAEGIDLTEEPYSDKHGRCGIPEALVQRYAEDLEQPERDVATNMDQIRVKLLRKQHRMAIPSGGLTEICRKPLSPGCVASMSDWLISIGLPMYTSTLSDAGFSTLSQVPSLSHSCLQEAGITEERHIRKLITAARLFKLPPSPEAM</sequence>
<proteinExistence type="evidence at protein level"/>